<gene>
    <name evidence="1" type="primary">gatA</name>
    <name type="ordered locus">SPJ_0421</name>
</gene>
<feature type="chain" id="PRO_1000122494" description="Glutamyl-tRNA(Gln) amidotransferase subunit A">
    <location>
        <begin position="1"/>
        <end position="488"/>
    </location>
</feature>
<feature type="active site" description="Charge relay system" evidence="1">
    <location>
        <position position="77"/>
    </location>
</feature>
<feature type="active site" description="Charge relay system" evidence="1">
    <location>
        <position position="152"/>
    </location>
</feature>
<feature type="active site" description="Acyl-ester intermediate" evidence="1">
    <location>
        <position position="176"/>
    </location>
</feature>
<keyword id="KW-0067">ATP-binding</keyword>
<keyword id="KW-0436">Ligase</keyword>
<keyword id="KW-0547">Nucleotide-binding</keyword>
<keyword id="KW-0648">Protein biosynthesis</keyword>
<proteinExistence type="inferred from homology"/>
<name>GATA_STRZJ</name>
<comment type="function">
    <text evidence="1">Allows the formation of correctly charged Gln-tRNA(Gln) through the transamidation of misacylated Glu-tRNA(Gln) in organisms which lack glutaminyl-tRNA synthetase. The reaction takes place in the presence of glutamine and ATP through an activated gamma-phospho-Glu-tRNA(Gln).</text>
</comment>
<comment type="catalytic activity">
    <reaction evidence="1">
        <text>L-glutamyl-tRNA(Gln) + L-glutamine + ATP + H2O = L-glutaminyl-tRNA(Gln) + L-glutamate + ADP + phosphate + H(+)</text>
        <dbReference type="Rhea" id="RHEA:17521"/>
        <dbReference type="Rhea" id="RHEA-COMP:9681"/>
        <dbReference type="Rhea" id="RHEA-COMP:9684"/>
        <dbReference type="ChEBI" id="CHEBI:15377"/>
        <dbReference type="ChEBI" id="CHEBI:15378"/>
        <dbReference type="ChEBI" id="CHEBI:29985"/>
        <dbReference type="ChEBI" id="CHEBI:30616"/>
        <dbReference type="ChEBI" id="CHEBI:43474"/>
        <dbReference type="ChEBI" id="CHEBI:58359"/>
        <dbReference type="ChEBI" id="CHEBI:78520"/>
        <dbReference type="ChEBI" id="CHEBI:78521"/>
        <dbReference type="ChEBI" id="CHEBI:456216"/>
        <dbReference type="EC" id="6.3.5.7"/>
    </reaction>
</comment>
<comment type="subunit">
    <text evidence="1">Heterotrimer of A, B and C subunits.</text>
</comment>
<comment type="similarity">
    <text evidence="1">Belongs to the amidase family. GatA subfamily.</text>
</comment>
<protein>
    <recommendedName>
        <fullName evidence="1">Glutamyl-tRNA(Gln) amidotransferase subunit A</fullName>
        <shortName evidence="1">Glu-ADT subunit A</shortName>
        <ecNumber evidence="1">6.3.5.7</ecNumber>
    </recommendedName>
</protein>
<dbReference type="EC" id="6.3.5.7" evidence="1"/>
<dbReference type="EMBL" id="CP000919">
    <property type="protein sequence ID" value="ACO18307.1"/>
    <property type="molecule type" value="Genomic_DNA"/>
</dbReference>
<dbReference type="RefSeq" id="WP_000143747.1">
    <property type="nucleotide sequence ID" value="NC_012466.1"/>
</dbReference>
<dbReference type="SMR" id="C1CCK0"/>
<dbReference type="KEGG" id="sjj:SPJ_0421"/>
<dbReference type="HOGENOM" id="CLU_009600_0_3_9"/>
<dbReference type="Proteomes" id="UP000002206">
    <property type="component" value="Chromosome"/>
</dbReference>
<dbReference type="GO" id="GO:0030956">
    <property type="term" value="C:glutamyl-tRNA(Gln) amidotransferase complex"/>
    <property type="evidence" value="ECO:0007669"/>
    <property type="project" value="InterPro"/>
</dbReference>
<dbReference type="GO" id="GO:0005524">
    <property type="term" value="F:ATP binding"/>
    <property type="evidence" value="ECO:0007669"/>
    <property type="project" value="UniProtKB-KW"/>
</dbReference>
<dbReference type="GO" id="GO:0050567">
    <property type="term" value="F:glutaminyl-tRNA synthase (glutamine-hydrolyzing) activity"/>
    <property type="evidence" value="ECO:0007669"/>
    <property type="project" value="UniProtKB-UniRule"/>
</dbReference>
<dbReference type="GO" id="GO:0006412">
    <property type="term" value="P:translation"/>
    <property type="evidence" value="ECO:0007669"/>
    <property type="project" value="UniProtKB-UniRule"/>
</dbReference>
<dbReference type="Gene3D" id="3.90.1300.10">
    <property type="entry name" value="Amidase signature (AS) domain"/>
    <property type="match status" value="1"/>
</dbReference>
<dbReference type="HAMAP" id="MF_00120">
    <property type="entry name" value="GatA"/>
    <property type="match status" value="1"/>
</dbReference>
<dbReference type="InterPro" id="IPR000120">
    <property type="entry name" value="Amidase"/>
</dbReference>
<dbReference type="InterPro" id="IPR020556">
    <property type="entry name" value="Amidase_CS"/>
</dbReference>
<dbReference type="InterPro" id="IPR023631">
    <property type="entry name" value="Amidase_dom"/>
</dbReference>
<dbReference type="InterPro" id="IPR036928">
    <property type="entry name" value="AS_sf"/>
</dbReference>
<dbReference type="InterPro" id="IPR004412">
    <property type="entry name" value="GatA"/>
</dbReference>
<dbReference type="NCBIfam" id="TIGR00132">
    <property type="entry name" value="gatA"/>
    <property type="match status" value="1"/>
</dbReference>
<dbReference type="PANTHER" id="PTHR11895:SF151">
    <property type="entry name" value="GLUTAMYL-TRNA(GLN) AMIDOTRANSFERASE SUBUNIT A"/>
    <property type="match status" value="1"/>
</dbReference>
<dbReference type="PANTHER" id="PTHR11895">
    <property type="entry name" value="TRANSAMIDASE"/>
    <property type="match status" value="1"/>
</dbReference>
<dbReference type="Pfam" id="PF01425">
    <property type="entry name" value="Amidase"/>
    <property type="match status" value="1"/>
</dbReference>
<dbReference type="SUPFAM" id="SSF75304">
    <property type="entry name" value="Amidase signature (AS) enzymes"/>
    <property type="match status" value="1"/>
</dbReference>
<dbReference type="PROSITE" id="PS00571">
    <property type="entry name" value="AMIDASES"/>
    <property type="match status" value="1"/>
</dbReference>
<organism>
    <name type="scientific">Streptococcus pneumoniae (strain JJA)</name>
    <dbReference type="NCBI Taxonomy" id="488222"/>
    <lineage>
        <taxon>Bacteria</taxon>
        <taxon>Bacillati</taxon>
        <taxon>Bacillota</taxon>
        <taxon>Bacilli</taxon>
        <taxon>Lactobacillales</taxon>
        <taxon>Streptococcaceae</taxon>
        <taxon>Streptococcus</taxon>
    </lineage>
</organism>
<evidence type="ECO:0000255" key="1">
    <source>
        <dbReference type="HAMAP-Rule" id="MF_00120"/>
    </source>
</evidence>
<reference key="1">
    <citation type="journal article" date="2010" name="Genome Biol.">
        <title>Structure and dynamics of the pan-genome of Streptococcus pneumoniae and closely related species.</title>
        <authorList>
            <person name="Donati C."/>
            <person name="Hiller N.L."/>
            <person name="Tettelin H."/>
            <person name="Muzzi A."/>
            <person name="Croucher N.J."/>
            <person name="Angiuoli S.V."/>
            <person name="Oggioni M."/>
            <person name="Dunning Hotopp J.C."/>
            <person name="Hu F.Z."/>
            <person name="Riley D.R."/>
            <person name="Covacci A."/>
            <person name="Mitchell T.J."/>
            <person name="Bentley S.D."/>
            <person name="Kilian M."/>
            <person name="Ehrlich G.D."/>
            <person name="Rappuoli R."/>
            <person name="Moxon E.R."/>
            <person name="Masignani V."/>
        </authorList>
    </citation>
    <scope>NUCLEOTIDE SEQUENCE [LARGE SCALE GENOMIC DNA]</scope>
    <source>
        <strain>JJA</strain>
    </source>
</reference>
<accession>C1CCK0</accession>
<sequence length="488" mass="52060">MTFNNKTIEELHNLLVSKEISATELTQATLENIKSREEALNSFVTIAEEQALVQAKAIDEAGIDADNVLSGIPLAVKDNISTDGILTTAASKMLYNYEPIFDATAVANAKTKGMIVVGKTNMDEFAMGGSGETSHYGATKNAWNHSKVPGGSSSGSAAAVASGQVRLSLGSDTGGSIRQPAAFNGIVGLKPTYGTVSRFGLIAFGSSLDQIGPFAPTVKENALLLNAIASEDAKDSTSAPVRIADFTSKIGQDIKGMKIALPKEYLGEGIDPEVKETILNAAKHFEKLGAIVEEVSLPHSKYGVAVYYIIASSEASSNLQRFDGIRYGYRAEDATNLDEIYVNSRSQGFGEEVKRRIMLGTFSLSSGYYDAYYKKAGQVRTLIIQDFEKVFADYDLILGPTAPSVAYDLDSLNHDPVAMYLADLLTIPVNLAGLPGISIPAGFSQGLPVGLQLIGPKYSEETIYQAAAAFEATTDYHKQQPVIFGGDN</sequence>